<geneLocation type="chloroplast"/>
<protein>
    <recommendedName>
        <fullName evidence="1">ATP synthase subunit alpha, chloroplastic</fullName>
        <ecNumber evidence="1">7.1.2.2</ecNumber>
    </recommendedName>
    <alternativeName>
        <fullName evidence="1">ATP synthase F1 sector subunit alpha</fullName>
    </alternativeName>
    <alternativeName>
        <fullName evidence="1">F-ATPase subunit alpha</fullName>
    </alternativeName>
</protein>
<feature type="chain" id="PRO_0000339073" description="ATP synthase subunit alpha, chloroplastic">
    <location>
        <begin position="1"/>
        <end position="507"/>
    </location>
</feature>
<feature type="binding site" evidence="1">
    <location>
        <begin position="170"/>
        <end position="177"/>
    </location>
    <ligand>
        <name>ATP</name>
        <dbReference type="ChEBI" id="CHEBI:30616"/>
    </ligand>
</feature>
<feature type="site" description="Required for activity" evidence="1">
    <location>
        <position position="363"/>
    </location>
</feature>
<reference key="1">
    <citation type="journal article" date="2007" name="Mol. Phylogenet. Evol.">
        <title>Phylogenetic and evolutionary implications of complete chloroplast genome sequences of four early-diverging angiosperms: Buxus (Buxaceae), Chloranthus (Chloranthaceae), Dioscorea (Dioscoreaceae), and Illicium (Schisandraceae).</title>
        <authorList>
            <person name="Hansen D.R."/>
            <person name="Dastidar S.G."/>
            <person name="Cai Z."/>
            <person name="Penaflor C."/>
            <person name="Kuehl J.V."/>
            <person name="Boore J.L."/>
            <person name="Jansen R.K."/>
        </authorList>
    </citation>
    <scope>NUCLEOTIDE SEQUENCE [LARGE SCALE GENOMIC DNA]</scope>
</reference>
<dbReference type="EC" id="7.1.2.2" evidence="1"/>
<dbReference type="EMBL" id="EF380351">
    <property type="protein sequence ID" value="ABQ45234.1"/>
    <property type="molecule type" value="Genomic_DNA"/>
</dbReference>
<dbReference type="RefSeq" id="YP_001294169.1">
    <property type="nucleotide sequence ID" value="NC_009599.1"/>
</dbReference>
<dbReference type="SMR" id="A6MM21"/>
<dbReference type="GeneID" id="5236937"/>
<dbReference type="GO" id="GO:0009535">
    <property type="term" value="C:chloroplast thylakoid membrane"/>
    <property type="evidence" value="ECO:0007669"/>
    <property type="project" value="UniProtKB-SubCell"/>
</dbReference>
<dbReference type="GO" id="GO:0045259">
    <property type="term" value="C:proton-transporting ATP synthase complex"/>
    <property type="evidence" value="ECO:0007669"/>
    <property type="project" value="UniProtKB-KW"/>
</dbReference>
<dbReference type="GO" id="GO:0043531">
    <property type="term" value="F:ADP binding"/>
    <property type="evidence" value="ECO:0007669"/>
    <property type="project" value="TreeGrafter"/>
</dbReference>
<dbReference type="GO" id="GO:0005524">
    <property type="term" value="F:ATP binding"/>
    <property type="evidence" value="ECO:0007669"/>
    <property type="project" value="UniProtKB-UniRule"/>
</dbReference>
<dbReference type="GO" id="GO:0046933">
    <property type="term" value="F:proton-transporting ATP synthase activity, rotational mechanism"/>
    <property type="evidence" value="ECO:0007669"/>
    <property type="project" value="UniProtKB-UniRule"/>
</dbReference>
<dbReference type="CDD" id="cd18113">
    <property type="entry name" value="ATP-synt_F1_alpha_C"/>
    <property type="match status" value="1"/>
</dbReference>
<dbReference type="CDD" id="cd18116">
    <property type="entry name" value="ATP-synt_F1_alpha_N"/>
    <property type="match status" value="1"/>
</dbReference>
<dbReference type="CDD" id="cd01132">
    <property type="entry name" value="F1-ATPase_alpha_CD"/>
    <property type="match status" value="1"/>
</dbReference>
<dbReference type="FunFam" id="1.20.150.20:FF:000001">
    <property type="entry name" value="ATP synthase subunit alpha"/>
    <property type="match status" value="1"/>
</dbReference>
<dbReference type="FunFam" id="2.40.30.20:FF:000001">
    <property type="entry name" value="ATP synthase subunit alpha"/>
    <property type="match status" value="1"/>
</dbReference>
<dbReference type="FunFam" id="3.40.50.300:FF:000002">
    <property type="entry name" value="ATP synthase subunit alpha"/>
    <property type="match status" value="1"/>
</dbReference>
<dbReference type="Gene3D" id="2.40.30.20">
    <property type="match status" value="1"/>
</dbReference>
<dbReference type="Gene3D" id="1.20.150.20">
    <property type="entry name" value="ATP synthase alpha/beta chain, C-terminal domain"/>
    <property type="match status" value="1"/>
</dbReference>
<dbReference type="Gene3D" id="3.40.50.300">
    <property type="entry name" value="P-loop containing nucleotide triphosphate hydrolases"/>
    <property type="match status" value="1"/>
</dbReference>
<dbReference type="HAMAP" id="MF_01346">
    <property type="entry name" value="ATP_synth_alpha_bact"/>
    <property type="match status" value="1"/>
</dbReference>
<dbReference type="InterPro" id="IPR023366">
    <property type="entry name" value="ATP_synth_asu-like_sf"/>
</dbReference>
<dbReference type="InterPro" id="IPR000793">
    <property type="entry name" value="ATP_synth_asu_C"/>
</dbReference>
<dbReference type="InterPro" id="IPR038376">
    <property type="entry name" value="ATP_synth_asu_C_sf"/>
</dbReference>
<dbReference type="InterPro" id="IPR033732">
    <property type="entry name" value="ATP_synth_F1_a_nt-bd_dom"/>
</dbReference>
<dbReference type="InterPro" id="IPR005294">
    <property type="entry name" value="ATP_synth_F1_asu"/>
</dbReference>
<dbReference type="InterPro" id="IPR020003">
    <property type="entry name" value="ATPase_a/bsu_AS"/>
</dbReference>
<dbReference type="InterPro" id="IPR004100">
    <property type="entry name" value="ATPase_F1/V1/A1_a/bsu_N"/>
</dbReference>
<dbReference type="InterPro" id="IPR036121">
    <property type="entry name" value="ATPase_F1/V1/A1_a/bsu_N_sf"/>
</dbReference>
<dbReference type="InterPro" id="IPR000194">
    <property type="entry name" value="ATPase_F1/V1/A1_a/bsu_nucl-bd"/>
</dbReference>
<dbReference type="InterPro" id="IPR027417">
    <property type="entry name" value="P-loop_NTPase"/>
</dbReference>
<dbReference type="NCBIfam" id="TIGR00962">
    <property type="entry name" value="atpA"/>
    <property type="match status" value="1"/>
</dbReference>
<dbReference type="NCBIfam" id="NF009884">
    <property type="entry name" value="PRK13343.1"/>
    <property type="match status" value="1"/>
</dbReference>
<dbReference type="PANTHER" id="PTHR48082">
    <property type="entry name" value="ATP SYNTHASE SUBUNIT ALPHA, MITOCHONDRIAL"/>
    <property type="match status" value="1"/>
</dbReference>
<dbReference type="PANTHER" id="PTHR48082:SF2">
    <property type="entry name" value="ATP SYNTHASE SUBUNIT ALPHA, MITOCHONDRIAL"/>
    <property type="match status" value="1"/>
</dbReference>
<dbReference type="Pfam" id="PF00006">
    <property type="entry name" value="ATP-synt_ab"/>
    <property type="match status" value="1"/>
</dbReference>
<dbReference type="Pfam" id="PF00306">
    <property type="entry name" value="ATP-synt_ab_C"/>
    <property type="match status" value="1"/>
</dbReference>
<dbReference type="Pfam" id="PF02874">
    <property type="entry name" value="ATP-synt_ab_N"/>
    <property type="match status" value="1"/>
</dbReference>
<dbReference type="PIRSF" id="PIRSF039088">
    <property type="entry name" value="F_ATPase_subunit_alpha"/>
    <property type="match status" value="1"/>
</dbReference>
<dbReference type="SUPFAM" id="SSF47917">
    <property type="entry name" value="C-terminal domain of alpha and beta subunits of F1 ATP synthase"/>
    <property type="match status" value="1"/>
</dbReference>
<dbReference type="SUPFAM" id="SSF50615">
    <property type="entry name" value="N-terminal domain of alpha and beta subunits of F1 ATP synthase"/>
    <property type="match status" value="1"/>
</dbReference>
<dbReference type="SUPFAM" id="SSF52540">
    <property type="entry name" value="P-loop containing nucleoside triphosphate hydrolases"/>
    <property type="match status" value="1"/>
</dbReference>
<dbReference type="PROSITE" id="PS00152">
    <property type="entry name" value="ATPASE_ALPHA_BETA"/>
    <property type="match status" value="1"/>
</dbReference>
<gene>
    <name evidence="1" type="primary">atpA</name>
</gene>
<accession>A6MM21</accession>
<proteinExistence type="inferred from homology"/>
<organism>
    <name type="scientific">Buxus microphylla</name>
    <name type="common">Littleleaf boxwood</name>
    <name type="synonym">Japanese boxwood</name>
    <dbReference type="NCBI Taxonomy" id="153571"/>
    <lineage>
        <taxon>Eukaryota</taxon>
        <taxon>Viridiplantae</taxon>
        <taxon>Streptophyta</taxon>
        <taxon>Embryophyta</taxon>
        <taxon>Tracheophyta</taxon>
        <taxon>Spermatophyta</taxon>
        <taxon>Magnoliopsida</taxon>
        <taxon>Buxales</taxon>
        <taxon>Buxaceae</taxon>
        <taxon>Buxus</taxon>
    </lineage>
</organism>
<keyword id="KW-0066">ATP synthesis</keyword>
<keyword id="KW-0067">ATP-binding</keyword>
<keyword id="KW-0139">CF(1)</keyword>
<keyword id="KW-0150">Chloroplast</keyword>
<keyword id="KW-0375">Hydrogen ion transport</keyword>
<keyword id="KW-0406">Ion transport</keyword>
<keyword id="KW-0472">Membrane</keyword>
<keyword id="KW-0547">Nucleotide-binding</keyword>
<keyword id="KW-0934">Plastid</keyword>
<keyword id="KW-0793">Thylakoid</keyword>
<keyword id="KW-1278">Translocase</keyword>
<keyword id="KW-0813">Transport</keyword>
<sequence>MVTIQADEISNIIRERIEQYNREVKIVNTGTVLQVGDGIARIHGLDEVMAGELVEFEEGTIGIALNLESNNVGVVLMGDGLMIQEGSSVKATGRIAQIPVSEGYLGRVINALAKPIDGRGEISASESRLIESPAPGIISRRSVYEPLQTGLIAIDSMIPIGRGQRELIIGDRQTGKTAVATDTILNQKGQNVICVYVAIGQKASSVAQVVTTFQERGAMEYTIVVAETADSPATLQYLAPYTGAALAEYFMYRERHTSIIYDDPSKQAQAYRQMSLLLRRPPGREAYPGDVFYLHSRLLERAAKSSSRLGEGSMTALPIVETQSGDVSAYIPTNVISITDGQIFLSADLFNAGIRPAINVGISVSRVGSAAQIKAMKQVAGKSKLELAQFAELEAFAQFASDLDKATQNQLARGQRLRELLKQSQSAPLTVEEQIVTIYTGTNGYLDSLEIGQVKKFLVQLRTYLKTNKPQFQEIISSTKTFTEEAEALLKEAIQEQMERFLLQEQT</sequence>
<comment type="function">
    <text evidence="1">Produces ATP from ADP in the presence of a proton gradient across the membrane. The alpha chain is a regulatory subunit.</text>
</comment>
<comment type="catalytic activity">
    <reaction evidence="1">
        <text>ATP + H2O + 4 H(+)(in) = ADP + phosphate + 5 H(+)(out)</text>
        <dbReference type="Rhea" id="RHEA:57720"/>
        <dbReference type="ChEBI" id="CHEBI:15377"/>
        <dbReference type="ChEBI" id="CHEBI:15378"/>
        <dbReference type="ChEBI" id="CHEBI:30616"/>
        <dbReference type="ChEBI" id="CHEBI:43474"/>
        <dbReference type="ChEBI" id="CHEBI:456216"/>
        <dbReference type="EC" id="7.1.2.2"/>
    </reaction>
</comment>
<comment type="subunit">
    <text evidence="1">F-type ATPases have 2 components, CF(1) - the catalytic core - and CF(0) - the membrane proton channel. CF(1) has five subunits: alpha(3), beta(3), gamma(1), delta(1), epsilon(1). CF(0) has four main subunits: a, b, b' and c.</text>
</comment>
<comment type="subcellular location">
    <subcellularLocation>
        <location evidence="1">Plastid</location>
        <location evidence="1">Chloroplast thylakoid membrane</location>
        <topology evidence="1">Peripheral membrane protein</topology>
    </subcellularLocation>
</comment>
<comment type="similarity">
    <text evidence="1">Belongs to the ATPase alpha/beta chains family.</text>
</comment>
<evidence type="ECO:0000255" key="1">
    <source>
        <dbReference type="HAMAP-Rule" id="MF_01346"/>
    </source>
</evidence>
<name>ATPA_BUXMI</name>